<dbReference type="EC" id="5.4.99.12" evidence="1"/>
<dbReference type="EMBL" id="CP000107">
    <property type="protein sequence ID" value="AAZ68462.1"/>
    <property type="molecule type" value="Genomic_DNA"/>
</dbReference>
<dbReference type="RefSeq" id="WP_011304540.1">
    <property type="nucleotide sequence ID" value="NC_007354.1"/>
</dbReference>
<dbReference type="SMR" id="Q3YS43"/>
<dbReference type="FunCoup" id="Q3YS43">
    <property type="interactions" value="300"/>
</dbReference>
<dbReference type="STRING" id="269484.Ecaj_0419"/>
<dbReference type="KEGG" id="ecn:Ecaj_0419"/>
<dbReference type="eggNOG" id="COG0101">
    <property type="taxonomic scope" value="Bacteria"/>
</dbReference>
<dbReference type="HOGENOM" id="CLU_014673_0_2_5"/>
<dbReference type="InParanoid" id="Q3YS43"/>
<dbReference type="Proteomes" id="UP000000435">
    <property type="component" value="Chromosome"/>
</dbReference>
<dbReference type="GO" id="GO:0003723">
    <property type="term" value="F:RNA binding"/>
    <property type="evidence" value="ECO:0007669"/>
    <property type="project" value="InterPro"/>
</dbReference>
<dbReference type="GO" id="GO:0160147">
    <property type="term" value="F:tRNA pseudouridine(38-40) synthase activity"/>
    <property type="evidence" value="ECO:0007669"/>
    <property type="project" value="UniProtKB-EC"/>
</dbReference>
<dbReference type="GO" id="GO:0031119">
    <property type="term" value="P:tRNA pseudouridine synthesis"/>
    <property type="evidence" value="ECO:0007669"/>
    <property type="project" value="UniProtKB-UniRule"/>
</dbReference>
<dbReference type="CDD" id="cd02570">
    <property type="entry name" value="PseudoU_synth_EcTruA"/>
    <property type="match status" value="1"/>
</dbReference>
<dbReference type="FunFam" id="3.30.70.580:FF:000001">
    <property type="entry name" value="tRNA pseudouridine synthase A"/>
    <property type="match status" value="1"/>
</dbReference>
<dbReference type="Gene3D" id="3.30.70.660">
    <property type="entry name" value="Pseudouridine synthase I, catalytic domain, C-terminal subdomain"/>
    <property type="match status" value="1"/>
</dbReference>
<dbReference type="Gene3D" id="3.30.70.580">
    <property type="entry name" value="Pseudouridine synthase I, catalytic domain, N-terminal subdomain"/>
    <property type="match status" value="1"/>
</dbReference>
<dbReference type="HAMAP" id="MF_00171">
    <property type="entry name" value="TruA"/>
    <property type="match status" value="1"/>
</dbReference>
<dbReference type="InterPro" id="IPR020103">
    <property type="entry name" value="PsdUridine_synth_cat_dom_sf"/>
</dbReference>
<dbReference type="InterPro" id="IPR001406">
    <property type="entry name" value="PsdUridine_synth_TruA"/>
</dbReference>
<dbReference type="InterPro" id="IPR020097">
    <property type="entry name" value="PsdUridine_synth_TruA_a/b_dom"/>
</dbReference>
<dbReference type="InterPro" id="IPR020095">
    <property type="entry name" value="PsdUridine_synth_TruA_C"/>
</dbReference>
<dbReference type="InterPro" id="IPR020094">
    <property type="entry name" value="TruA/RsuA/RluB/E/F_N"/>
</dbReference>
<dbReference type="NCBIfam" id="TIGR00071">
    <property type="entry name" value="hisT_truA"/>
    <property type="match status" value="1"/>
</dbReference>
<dbReference type="PANTHER" id="PTHR11142">
    <property type="entry name" value="PSEUDOURIDYLATE SYNTHASE"/>
    <property type="match status" value="1"/>
</dbReference>
<dbReference type="PANTHER" id="PTHR11142:SF0">
    <property type="entry name" value="TRNA PSEUDOURIDINE SYNTHASE-LIKE 1"/>
    <property type="match status" value="1"/>
</dbReference>
<dbReference type="Pfam" id="PF01416">
    <property type="entry name" value="PseudoU_synth_1"/>
    <property type="match status" value="2"/>
</dbReference>
<dbReference type="PIRSF" id="PIRSF001430">
    <property type="entry name" value="tRNA_psdUrid_synth"/>
    <property type="match status" value="1"/>
</dbReference>
<dbReference type="SUPFAM" id="SSF55120">
    <property type="entry name" value="Pseudouridine synthase"/>
    <property type="match status" value="1"/>
</dbReference>
<proteinExistence type="inferred from homology"/>
<feature type="chain" id="PRO_1000017078" description="tRNA pseudouridine synthase A">
    <location>
        <begin position="1"/>
        <end position="245"/>
    </location>
</feature>
<feature type="active site" description="Nucleophile" evidence="1">
    <location>
        <position position="52"/>
    </location>
</feature>
<feature type="binding site" evidence="1">
    <location>
        <position position="111"/>
    </location>
    <ligand>
        <name>substrate</name>
    </ligand>
</feature>
<comment type="function">
    <text evidence="1">Formation of pseudouridine at positions 38, 39 and 40 in the anticodon stem and loop of transfer RNAs.</text>
</comment>
<comment type="catalytic activity">
    <reaction evidence="1">
        <text>uridine(38/39/40) in tRNA = pseudouridine(38/39/40) in tRNA</text>
        <dbReference type="Rhea" id="RHEA:22376"/>
        <dbReference type="Rhea" id="RHEA-COMP:10085"/>
        <dbReference type="Rhea" id="RHEA-COMP:10087"/>
        <dbReference type="ChEBI" id="CHEBI:65314"/>
        <dbReference type="ChEBI" id="CHEBI:65315"/>
        <dbReference type="EC" id="5.4.99.12"/>
    </reaction>
</comment>
<comment type="subunit">
    <text evidence="1">Homodimer.</text>
</comment>
<comment type="similarity">
    <text evidence="1">Belongs to the tRNA pseudouridine synthase TruA family.</text>
</comment>
<reference key="1">
    <citation type="journal article" date="2006" name="J. Bacteriol.">
        <title>The genome of the obligately intracellular bacterium Ehrlichia canis reveals themes of complex membrane structure and immune evasion strategies.</title>
        <authorList>
            <person name="Mavromatis K."/>
            <person name="Doyle C.K."/>
            <person name="Lykidis A."/>
            <person name="Ivanova N."/>
            <person name="Francino M.P."/>
            <person name="Chain P."/>
            <person name="Shin M."/>
            <person name="Malfatti S."/>
            <person name="Larimer F."/>
            <person name="Copeland A."/>
            <person name="Detter J.C."/>
            <person name="Land M."/>
            <person name="Richardson P.M."/>
            <person name="Yu X.J."/>
            <person name="Walker D.H."/>
            <person name="McBride J.W."/>
            <person name="Kyrpides N.C."/>
        </authorList>
    </citation>
    <scope>NUCLEOTIDE SEQUENCE [LARGE SCALE GENOMIC DNA]</scope>
    <source>
        <strain>Jake</strain>
    </source>
</reference>
<sequence>MRYKITIEYNGSNFIGWQRQKHLSNSIQEILEEAIFKFSRESVTTYVAGRTDAGVHALGQVAHFDLTADFDAYVVRNAINYHLIPHSISVLNVEKTDDEFHARFSAKKRHYLYKIINRYSPLTIDYNRAWLVRNPLDVEKMMRAVEYIKGNHDFSSFRARHCQSKSPVKTMDDLKIIHSDQCIDIYFSAISFLHNQVRIIVGTLVECGKNSFPPEYTKDILEAKDRSYAGMTAPPYGLYFVKVDY</sequence>
<gene>
    <name evidence="1" type="primary">truA</name>
    <name type="ordered locus">Ecaj_0419</name>
</gene>
<accession>Q3YS43</accession>
<organism>
    <name type="scientific">Ehrlichia canis (strain Jake)</name>
    <dbReference type="NCBI Taxonomy" id="269484"/>
    <lineage>
        <taxon>Bacteria</taxon>
        <taxon>Pseudomonadati</taxon>
        <taxon>Pseudomonadota</taxon>
        <taxon>Alphaproteobacteria</taxon>
        <taxon>Rickettsiales</taxon>
        <taxon>Anaplasmataceae</taxon>
        <taxon>Ehrlichia</taxon>
    </lineage>
</organism>
<keyword id="KW-0413">Isomerase</keyword>
<keyword id="KW-0819">tRNA processing</keyword>
<protein>
    <recommendedName>
        <fullName evidence="1">tRNA pseudouridine synthase A</fullName>
        <ecNumber evidence="1">5.4.99.12</ecNumber>
    </recommendedName>
    <alternativeName>
        <fullName evidence="1">tRNA pseudouridine(38-40) synthase</fullName>
    </alternativeName>
    <alternativeName>
        <fullName evidence="1">tRNA pseudouridylate synthase I</fullName>
    </alternativeName>
    <alternativeName>
        <fullName evidence="1">tRNA-uridine isomerase I</fullName>
    </alternativeName>
</protein>
<evidence type="ECO:0000255" key="1">
    <source>
        <dbReference type="HAMAP-Rule" id="MF_00171"/>
    </source>
</evidence>
<name>TRUA_EHRCJ</name>